<keyword id="KW-0067">ATP-binding</keyword>
<keyword id="KW-0143">Chaperone</keyword>
<keyword id="KW-0963">Cytoplasm</keyword>
<keyword id="KW-0903">Direct protein sequencing</keyword>
<keyword id="KW-0413">Isomerase</keyword>
<keyword id="KW-0547">Nucleotide-binding</keyword>
<keyword id="KW-1185">Reference proteome</keyword>
<sequence>MAKQLVFDESARRSLERGVNAVANAVKVTLGPRGRNVVIEKKFGSPTITKDGVTVAKEVELEDKLENIGAQLLKEVASKTNDITGDGTTTATVLGQAIVKEGLRNVAAGANPLALKRGIDKAVAVAIEEIKKLAVSVEDSEAIKKVAGISANDETVGQEIASAMDKVGKEGVITIEESKGFDTEVDVVEGMQFDKGFINPYFITNPEKMEAVLEDAYILINEKKISNLKDMLPVLEKVAQTGRPLLIIAEDVEGEALATLVVNKLRGTLNIAAVKAPGFGDRRKEMLRDIAAVTGGEVVSEDLGHKLENVGMEMLGRAARIRITKDETTIVDGKGEQAQIDARVNAIKGELDSTDSDYAREKLQERLAKLSGGVAVIRVGAATETELKEKKHRYEDALSTARSAVEEGIVAGGGTTLLRVIPAVRKAAESLTGDEATGARILIRALEEPARQIAANAGEEGSVIVNAVVGSDKARYGFNAATGEYVEDMVAAGIVDPAKVTRTALQNAASIGALILTTEAIVSDKPEKAAPAMPQGGGDMGGMGGMDF</sequence>
<proteinExistence type="evidence at protein level"/>
<feature type="initiator methionine" description="Removed" evidence="2">
    <location>
        <position position="1"/>
    </location>
</feature>
<feature type="chain" id="PRO_0000063355" description="Chaperonin GroEL">
    <location>
        <begin position="2"/>
        <end position="548"/>
    </location>
</feature>
<feature type="binding site" evidence="1">
    <location>
        <begin position="29"/>
        <end position="32"/>
    </location>
    <ligand>
        <name>ATP</name>
        <dbReference type="ChEBI" id="CHEBI:30616"/>
    </ligand>
</feature>
<feature type="binding site" evidence="1">
    <location>
        <position position="50"/>
    </location>
    <ligand>
        <name>ATP</name>
        <dbReference type="ChEBI" id="CHEBI:30616"/>
    </ligand>
</feature>
<feature type="binding site" evidence="1">
    <location>
        <begin position="86"/>
        <end position="90"/>
    </location>
    <ligand>
        <name>ATP</name>
        <dbReference type="ChEBI" id="CHEBI:30616"/>
    </ligand>
</feature>
<feature type="binding site" evidence="1">
    <location>
        <position position="413"/>
    </location>
    <ligand>
        <name>ATP</name>
        <dbReference type="ChEBI" id="CHEBI:30616"/>
    </ligand>
</feature>
<feature type="binding site" evidence="1">
    <location>
        <begin position="479"/>
        <end position="481"/>
    </location>
    <ligand>
        <name>ATP</name>
        <dbReference type="ChEBI" id="CHEBI:30616"/>
    </ligand>
</feature>
<feature type="binding site" evidence="1">
    <location>
        <position position="496"/>
    </location>
    <ligand>
        <name>ATP</name>
        <dbReference type="ChEBI" id="CHEBI:30616"/>
    </ligand>
</feature>
<protein>
    <recommendedName>
        <fullName evidence="1">Chaperonin GroEL</fullName>
        <ecNumber evidence="1">5.6.1.7</ecNumber>
    </recommendedName>
    <alternativeName>
        <fullName evidence="1">60 kDa chaperonin</fullName>
    </alternativeName>
    <alternativeName>
        <fullName evidence="1">Chaperonin-60</fullName>
        <shortName evidence="1">Cpn60</shortName>
    </alternativeName>
</protein>
<dbReference type="EC" id="5.6.1.7" evidence="1"/>
<dbReference type="EMBL" id="AE000513">
    <property type="protein sequence ID" value="AAF10186.1"/>
    <property type="molecule type" value="Genomic_DNA"/>
</dbReference>
<dbReference type="PIR" id="G75499">
    <property type="entry name" value="G75499"/>
</dbReference>
<dbReference type="RefSeq" id="NP_294330.1">
    <property type="nucleotide sequence ID" value="NC_001263.1"/>
</dbReference>
<dbReference type="RefSeq" id="WP_010887252.1">
    <property type="nucleotide sequence ID" value="NC_001263.1"/>
</dbReference>
<dbReference type="SMR" id="Q9RWQ9"/>
<dbReference type="FunCoup" id="Q9RWQ9">
    <property type="interactions" value="468"/>
</dbReference>
<dbReference type="STRING" id="243230.DR_0607"/>
<dbReference type="PaxDb" id="243230-DR_0607"/>
<dbReference type="EnsemblBacteria" id="AAF10186">
    <property type="protein sequence ID" value="AAF10186"/>
    <property type="gene ID" value="DR_0607"/>
</dbReference>
<dbReference type="GeneID" id="69516851"/>
<dbReference type="KEGG" id="dra:DR_0607"/>
<dbReference type="PATRIC" id="fig|243230.17.peg.785"/>
<dbReference type="eggNOG" id="COG0459">
    <property type="taxonomic scope" value="Bacteria"/>
</dbReference>
<dbReference type="HOGENOM" id="CLU_016503_3_0_0"/>
<dbReference type="InParanoid" id="Q9RWQ9"/>
<dbReference type="OrthoDB" id="9766614at2"/>
<dbReference type="Proteomes" id="UP000002524">
    <property type="component" value="Chromosome 1"/>
</dbReference>
<dbReference type="GO" id="GO:1990220">
    <property type="term" value="C:GroEL-GroES complex"/>
    <property type="evidence" value="ECO:0000318"/>
    <property type="project" value="GO_Central"/>
</dbReference>
<dbReference type="GO" id="GO:0005524">
    <property type="term" value="F:ATP binding"/>
    <property type="evidence" value="ECO:0000318"/>
    <property type="project" value="GO_Central"/>
</dbReference>
<dbReference type="GO" id="GO:0140662">
    <property type="term" value="F:ATP-dependent protein folding chaperone"/>
    <property type="evidence" value="ECO:0007669"/>
    <property type="project" value="InterPro"/>
</dbReference>
<dbReference type="GO" id="GO:0016853">
    <property type="term" value="F:isomerase activity"/>
    <property type="evidence" value="ECO:0007669"/>
    <property type="project" value="UniProtKB-KW"/>
</dbReference>
<dbReference type="GO" id="GO:0051082">
    <property type="term" value="F:unfolded protein binding"/>
    <property type="evidence" value="ECO:0000318"/>
    <property type="project" value="GO_Central"/>
</dbReference>
<dbReference type="GO" id="GO:0051085">
    <property type="term" value="P:chaperone cofactor-dependent protein refolding"/>
    <property type="evidence" value="ECO:0000318"/>
    <property type="project" value="GO_Central"/>
</dbReference>
<dbReference type="GO" id="GO:0042026">
    <property type="term" value="P:protein refolding"/>
    <property type="evidence" value="ECO:0007669"/>
    <property type="project" value="UniProtKB-UniRule"/>
</dbReference>
<dbReference type="GO" id="GO:0009408">
    <property type="term" value="P:response to heat"/>
    <property type="evidence" value="ECO:0000318"/>
    <property type="project" value="GO_Central"/>
</dbReference>
<dbReference type="CDD" id="cd03344">
    <property type="entry name" value="GroEL"/>
    <property type="match status" value="1"/>
</dbReference>
<dbReference type="FunFam" id="3.50.7.10:FF:000001">
    <property type="entry name" value="60 kDa chaperonin"/>
    <property type="match status" value="1"/>
</dbReference>
<dbReference type="Gene3D" id="3.50.7.10">
    <property type="entry name" value="GroEL"/>
    <property type="match status" value="1"/>
</dbReference>
<dbReference type="Gene3D" id="1.10.560.10">
    <property type="entry name" value="GroEL-like equatorial domain"/>
    <property type="match status" value="1"/>
</dbReference>
<dbReference type="Gene3D" id="3.30.260.10">
    <property type="entry name" value="TCP-1-like chaperonin intermediate domain"/>
    <property type="match status" value="1"/>
</dbReference>
<dbReference type="HAMAP" id="MF_00600">
    <property type="entry name" value="CH60"/>
    <property type="match status" value="1"/>
</dbReference>
<dbReference type="InterPro" id="IPR001844">
    <property type="entry name" value="Cpn60/GroEL"/>
</dbReference>
<dbReference type="InterPro" id="IPR002423">
    <property type="entry name" value="Cpn60/GroEL/TCP-1"/>
</dbReference>
<dbReference type="InterPro" id="IPR027409">
    <property type="entry name" value="GroEL-like_apical_dom_sf"/>
</dbReference>
<dbReference type="InterPro" id="IPR027413">
    <property type="entry name" value="GROEL-like_equatorial_sf"/>
</dbReference>
<dbReference type="InterPro" id="IPR027410">
    <property type="entry name" value="TCP-1-like_intermed_sf"/>
</dbReference>
<dbReference type="NCBIfam" id="TIGR02348">
    <property type="entry name" value="GroEL"/>
    <property type="match status" value="1"/>
</dbReference>
<dbReference type="NCBIfam" id="NF000592">
    <property type="entry name" value="PRK00013.1"/>
    <property type="match status" value="1"/>
</dbReference>
<dbReference type="NCBIfam" id="NF009487">
    <property type="entry name" value="PRK12849.1"/>
    <property type="match status" value="1"/>
</dbReference>
<dbReference type="NCBIfam" id="NF009488">
    <property type="entry name" value="PRK12850.1"/>
    <property type="match status" value="1"/>
</dbReference>
<dbReference type="NCBIfam" id="NF009489">
    <property type="entry name" value="PRK12851.1"/>
    <property type="match status" value="1"/>
</dbReference>
<dbReference type="PANTHER" id="PTHR45633">
    <property type="entry name" value="60 KDA HEAT SHOCK PROTEIN, MITOCHONDRIAL"/>
    <property type="match status" value="1"/>
</dbReference>
<dbReference type="Pfam" id="PF00118">
    <property type="entry name" value="Cpn60_TCP1"/>
    <property type="match status" value="1"/>
</dbReference>
<dbReference type="PRINTS" id="PR00298">
    <property type="entry name" value="CHAPERONIN60"/>
</dbReference>
<dbReference type="SUPFAM" id="SSF52029">
    <property type="entry name" value="GroEL apical domain-like"/>
    <property type="match status" value="1"/>
</dbReference>
<dbReference type="SUPFAM" id="SSF48592">
    <property type="entry name" value="GroEL equatorial domain-like"/>
    <property type="match status" value="1"/>
</dbReference>
<dbReference type="SUPFAM" id="SSF54849">
    <property type="entry name" value="GroEL-intermediate domain like"/>
    <property type="match status" value="1"/>
</dbReference>
<organism>
    <name type="scientific">Deinococcus radiodurans (strain ATCC 13939 / DSM 20539 / JCM 16871 / CCUG 27074 / LMG 4051 / NBRC 15346 / NCIMB 9279 / VKM B-1422 / R1)</name>
    <dbReference type="NCBI Taxonomy" id="243230"/>
    <lineage>
        <taxon>Bacteria</taxon>
        <taxon>Thermotogati</taxon>
        <taxon>Deinococcota</taxon>
        <taxon>Deinococci</taxon>
        <taxon>Deinococcales</taxon>
        <taxon>Deinococcaceae</taxon>
        <taxon>Deinococcus</taxon>
    </lineage>
</organism>
<comment type="function">
    <text evidence="1">Together with its co-chaperonin GroES, plays an essential role in assisting protein folding. The GroEL-GroES system forms a nano-cage that allows encapsulation of the non-native substrate proteins and provides a physical environment optimized to promote and accelerate protein folding.</text>
</comment>
<comment type="catalytic activity">
    <reaction evidence="1">
        <text>ATP + H2O + a folded polypeptide = ADP + phosphate + an unfolded polypeptide.</text>
        <dbReference type="EC" id="5.6.1.7"/>
    </reaction>
</comment>
<comment type="subunit">
    <text evidence="1">Forms a cylinder of 14 subunits composed of two heptameric rings stacked back-to-back. Interacts with the co-chaperonin GroES.</text>
</comment>
<comment type="subcellular location">
    <subcellularLocation>
        <location evidence="1">Cytoplasm</location>
    </subcellularLocation>
</comment>
<comment type="similarity">
    <text evidence="1">Belongs to the chaperonin (HSP60) family.</text>
</comment>
<gene>
    <name evidence="1" type="primary">groEL</name>
    <name evidence="1" type="synonym">groL</name>
    <name type="ordered locus">DR_0607</name>
</gene>
<evidence type="ECO:0000255" key="1">
    <source>
        <dbReference type="HAMAP-Rule" id="MF_00600"/>
    </source>
</evidence>
<evidence type="ECO:0000269" key="2">
    <source>
    </source>
</evidence>
<reference key="1">
    <citation type="journal article" date="1999" name="Science">
        <title>Genome sequence of the radioresistant bacterium Deinococcus radiodurans R1.</title>
        <authorList>
            <person name="White O."/>
            <person name="Eisen J.A."/>
            <person name="Heidelberg J.F."/>
            <person name="Hickey E.K."/>
            <person name="Peterson J.D."/>
            <person name="Dodson R.J."/>
            <person name="Haft D.H."/>
            <person name="Gwinn M.L."/>
            <person name="Nelson W.C."/>
            <person name="Richardson D.L."/>
            <person name="Moffat K.S."/>
            <person name="Qin H."/>
            <person name="Jiang L."/>
            <person name="Pamphile W."/>
            <person name="Crosby M."/>
            <person name="Shen M."/>
            <person name="Vamathevan J.J."/>
            <person name="Lam P."/>
            <person name="McDonald L.A."/>
            <person name="Utterback T.R."/>
            <person name="Zalewski C."/>
            <person name="Makarova K.S."/>
            <person name="Aravind L."/>
            <person name="Daly M.J."/>
            <person name="Minton K.W."/>
            <person name="Fleischmann R.D."/>
            <person name="Ketchum K.A."/>
            <person name="Nelson K.E."/>
            <person name="Salzberg S.L."/>
            <person name="Smith H.O."/>
            <person name="Venter J.C."/>
            <person name="Fraser C.M."/>
        </authorList>
    </citation>
    <scope>NUCLEOTIDE SEQUENCE [LARGE SCALE GENOMIC DNA]</scope>
    <source>
        <strain>ATCC 13939 / DSM 20539 / JCM 16871 / CCUG 27074 / LMG 4051 / NBRC 15346 / NCIMB 9279 / VKM B-1422 / R1</strain>
    </source>
</reference>
<reference key="2">
    <citation type="journal article" date="2004" name="Biochem. Biophys. Res. Commun.">
        <title>Protein recycling is a major component of post-irradiation recovery in Deinococcus radiodurans strain R1.</title>
        <authorList>
            <person name="Joshi B.S."/>
            <person name="Schmid R."/>
            <person name="Altendorf K."/>
            <person name="Apte S.K."/>
        </authorList>
    </citation>
    <scope>PROTEIN SEQUENCE OF 2-19</scope>
    <source>
        <strain>ATCC 13939 / DSM 20539 / JCM 16871 / CCUG 27074 / LMG 4051 / NBRC 15346 / NCIMB 9279 / VKM B-1422 / R1</strain>
    </source>
</reference>
<name>CH60_DEIRA</name>
<accession>Q9RWQ9</accession>